<comment type="function">
    <text evidence="1">Forms a fork protection complex (FPC) with TOF1 and which is required for chromosome segregation during meiosis and DNA damage repair. FPC coordinates leading and lagging strand synthesis and moves with the replication fork. FPC stabilizes replication forks in a configuration that is recognized by replication checkpoint sensors (By similarity).</text>
</comment>
<comment type="subunit">
    <text evidence="1">Component of the fork protection complex (FPC) consisting of TOF1 and CSM3.</text>
</comment>
<comment type="subcellular location">
    <subcellularLocation>
        <location evidence="1">Nucleus</location>
    </subcellularLocation>
</comment>
<comment type="similarity">
    <text evidence="3">Belongs to the CSM3 family.</text>
</comment>
<gene>
    <name type="primary">CSM3</name>
    <name type="ORF">PICST_32328</name>
</gene>
<reference key="1">
    <citation type="journal article" date="2007" name="Nat. Biotechnol.">
        <title>Genome sequence of the lignocellulose-bioconverting and xylose-fermenting yeast Pichia stipitis.</title>
        <authorList>
            <person name="Jeffries T.W."/>
            <person name="Grigoriev I.V."/>
            <person name="Grimwood J."/>
            <person name="Laplaza J.M."/>
            <person name="Aerts A."/>
            <person name="Salamov A."/>
            <person name="Schmutz J."/>
            <person name="Lindquist E."/>
            <person name="Dehal P."/>
            <person name="Shapiro H."/>
            <person name="Jin Y.-S."/>
            <person name="Passoth V."/>
            <person name="Richardson P.M."/>
        </authorList>
    </citation>
    <scope>NUCLEOTIDE SEQUENCE [LARGE SCALE GENOMIC DNA]</scope>
    <source>
        <strain>ATCC 58785 / CBS 6054 / NBRC 10063 / NRRL Y-11545</strain>
    </source>
</reference>
<feature type="chain" id="PRO_0000301725" description="Chromosome segregation in meiosis protein 3">
    <location>
        <begin position="1"/>
        <end position="352"/>
    </location>
</feature>
<feature type="region of interest" description="Disordered" evidence="2">
    <location>
        <begin position="16"/>
        <end position="44"/>
    </location>
</feature>
<feature type="region of interest" description="Disordered" evidence="2">
    <location>
        <begin position="330"/>
        <end position="352"/>
    </location>
</feature>
<feature type="compositionally biased region" description="Basic and acidic residues" evidence="2">
    <location>
        <begin position="16"/>
        <end position="37"/>
    </location>
</feature>
<organism>
    <name type="scientific">Scheffersomyces stipitis (strain ATCC 58785 / CBS 6054 / NBRC 10063 / NRRL Y-11545)</name>
    <name type="common">Yeast</name>
    <name type="synonym">Pichia stipitis</name>
    <dbReference type="NCBI Taxonomy" id="322104"/>
    <lineage>
        <taxon>Eukaryota</taxon>
        <taxon>Fungi</taxon>
        <taxon>Dikarya</taxon>
        <taxon>Ascomycota</taxon>
        <taxon>Saccharomycotina</taxon>
        <taxon>Pichiomycetes</taxon>
        <taxon>Debaryomycetaceae</taxon>
        <taxon>Scheffersomyces</taxon>
    </lineage>
</organism>
<evidence type="ECO:0000250" key="1"/>
<evidence type="ECO:0000256" key="2">
    <source>
        <dbReference type="SAM" id="MobiDB-lite"/>
    </source>
</evidence>
<evidence type="ECO:0000305" key="3"/>
<protein>
    <recommendedName>
        <fullName>Chromosome segregation in meiosis protein 3</fullName>
    </recommendedName>
</protein>
<keyword id="KW-0131">Cell cycle</keyword>
<keyword id="KW-0227">DNA damage</keyword>
<keyword id="KW-0234">DNA repair</keyword>
<keyword id="KW-0236">DNA replication inhibitor</keyword>
<keyword id="KW-0469">Meiosis</keyword>
<keyword id="KW-0539">Nucleus</keyword>
<keyword id="KW-1185">Reference proteome</keyword>
<proteinExistence type="inferred from homology"/>
<sequence>MSGFLDDYSESLEQFESFRADDQDVHQHITSGEHDPVDGDSNVADAEQDDLLGLDTQIKLTKRKPTARVDNNRIFSQKGLGYLLKNHHKLSKTIQRNDKQFEEKSKNGRVHRAQKFQHEYDNLSSVLQFYQLWCHGMFPKANFKDCVHLLRLLGAKSPRLRLYRRELIEQEIIKLKEASGIIVEQEERENTLQAGNIIVDAENQETEDIIEASNINNVVSTETSGETNGLFVGDNDDDDLYHTPPPPETVSPNIAVSSIVVSKPDLADITGVSDTDTTIVDKSEVNIQPIAIPVLTQVSDLTNTTNNESDHDAFSDDDDFYASLNETFVHQERPPQESDYDAEEEVMKEMGL</sequence>
<dbReference type="EMBL" id="CP000499">
    <property type="protein sequence ID" value="ABN67214.2"/>
    <property type="molecule type" value="Genomic_DNA"/>
</dbReference>
<dbReference type="RefSeq" id="XP_001385243.2">
    <property type="nucleotide sequence ID" value="XM_001385206.1"/>
</dbReference>
<dbReference type="SMR" id="A3LW29"/>
<dbReference type="STRING" id="322104.A3LW29"/>
<dbReference type="GeneID" id="4839568"/>
<dbReference type="KEGG" id="pic:PICST_32328"/>
<dbReference type="eggNOG" id="KOG3004">
    <property type="taxonomic scope" value="Eukaryota"/>
</dbReference>
<dbReference type="HOGENOM" id="CLU_068092_0_0_1"/>
<dbReference type="InParanoid" id="A3LW29"/>
<dbReference type="OMA" id="REHENLG"/>
<dbReference type="OrthoDB" id="437078at2759"/>
<dbReference type="Proteomes" id="UP000002258">
    <property type="component" value="Chromosome 5"/>
</dbReference>
<dbReference type="GO" id="GO:0031298">
    <property type="term" value="C:replication fork protection complex"/>
    <property type="evidence" value="ECO:0007669"/>
    <property type="project" value="TreeGrafter"/>
</dbReference>
<dbReference type="GO" id="GO:0003677">
    <property type="term" value="F:DNA binding"/>
    <property type="evidence" value="ECO:0007669"/>
    <property type="project" value="TreeGrafter"/>
</dbReference>
<dbReference type="GO" id="GO:0006281">
    <property type="term" value="P:DNA repair"/>
    <property type="evidence" value="ECO:0007669"/>
    <property type="project" value="UniProtKB-KW"/>
</dbReference>
<dbReference type="GO" id="GO:0000076">
    <property type="term" value="P:DNA replication checkpoint signaling"/>
    <property type="evidence" value="ECO:0007669"/>
    <property type="project" value="InterPro"/>
</dbReference>
<dbReference type="GO" id="GO:0051321">
    <property type="term" value="P:meiotic cell cycle"/>
    <property type="evidence" value="ECO:0007669"/>
    <property type="project" value="UniProtKB-KW"/>
</dbReference>
<dbReference type="GO" id="GO:0043111">
    <property type="term" value="P:replication fork arrest"/>
    <property type="evidence" value="ECO:0007669"/>
    <property type="project" value="TreeGrafter"/>
</dbReference>
<dbReference type="GO" id="GO:0031297">
    <property type="term" value="P:replication fork processing"/>
    <property type="evidence" value="ECO:0007669"/>
    <property type="project" value="InterPro"/>
</dbReference>
<dbReference type="InterPro" id="IPR012923">
    <property type="entry name" value="Csm3"/>
</dbReference>
<dbReference type="InterPro" id="IPR040038">
    <property type="entry name" value="TIPIN/Csm3/Swi3"/>
</dbReference>
<dbReference type="PANTHER" id="PTHR13220">
    <property type="entry name" value="TIMELESS INTERACTING-RELATED"/>
    <property type="match status" value="1"/>
</dbReference>
<dbReference type="PANTHER" id="PTHR13220:SF11">
    <property type="entry name" value="TIMELESS-INTERACTING PROTEIN"/>
    <property type="match status" value="1"/>
</dbReference>
<dbReference type="Pfam" id="PF07962">
    <property type="entry name" value="Swi3"/>
    <property type="match status" value="1"/>
</dbReference>
<name>CSM3_PICST</name>
<accession>A3LW29</accession>